<organism>
    <name type="scientific">Sorghum bicolor</name>
    <name type="common">Sorghum</name>
    <name type="synonym">Sorghum vulgare</name>
    <dbReference type="NCBI Taxonomy" id="4558"/>
    <lineage>
        <taxon>Eukaryota</taxon>
        <taxon>Viridiplantae</taxon>
        <taxon>Streptophyta</taxon>
        <taxon>Embryophyta</taxon>
        <taxon>Tracheophyta</taxon>
        <taxon>Spermatophyta</taxon>
        <taxon>Magnoliopsida</taxon>
        <taxon>Liliopsida</taxon>
        <taxon>Poales</taxon>
        <taxon>Poaceae</taxon>
        <taxon>PACMAD clade</taxon>
        <taxon>Panicoideae</taxon>
        <taxon>Andropogonodae</taxon>
        <taxon>Andropogoneae</taxon>
        <taxon>Sorghinae</taxon>
        <taxon>Sorghum</taxon>
    </lineage>
</organism>
<comment type="function">
    <text evidence="2">Photosystem II (PSII) is a light-driven water:plastoquinone oxidoreductase that uses light energy to abstract electrons from H(2)O, generating O(2) and a proton gradient subsequently used for ATP formation. It consists of a core antenna complex that captures photons, and an electron transfer chain that converts photonic excitation into a charge separation. The D1/D2 (PsbA/PsbD) reaction center heterodimer binds P680, the primary electron donor of PSII as well as several subsequent electron acceptors. D2 is needed for assembly of a stable PSII complex.</text>
</comment>
<comment type="catalytic activity">
    <reaction evidence="2">
        <text>2 a plastoquinone + 4 hnu + 2 H2O = 2 a plastoquinol + O2</text>
        <dbReference type="Rhea" id="RHEA:36359"/>
        <dbReference type="Rhea" id="RHEA-COMP:9561"/>
        <dbReference type="Rhea" id="RHEA-COMP:9562"/>
        <dbReference type="ChEBI" id="CHEBI:15377"/>
        <dbReference type="ChEBI" id="CHEBI:15379"/>
        <dbReference type="ChEBI" id="CHEBI:17757"/>
        <dbReference type="ChEBI" id="CHEBI:30212"/>
        <dbReference type="ChEBI" id="CHEBI:62192"/>
        <dbReference type="EC" id="1.10.3.9"/>
    </reaction>
</comment>
<comment type="cofactor">
    <text evidence="2">The D1/D2 heterodimer binds P680, chlorophylls that are the primary electron donor of PSII, and subsequent electron acceptors. It shares a non-heme iron and each subunit binds pheophytin, quinone, additional chlorophylls, carotenoids and lipids. There is also a Cl(-1) ion associated with D1 and D2, which is required for oxygen evolution. The PSII complex binds additional chlorophylls, carotenoids and specific lipids.</text>
</comment>
<comment type="subunit">
    <text evidence="2">PSII is composed of 1 copy each of membrane proteins PsbA, PsbB, PsbC, PsbD, PsbE, PsbF, PsbH, PsbI, PsbJ, PsbK, PsbL, PsbM, PsbT, PsbX, PsbY, PsbZ, Psb30/Ycf12, at least 3 peripheral proteins of the oxygen-evolving complex and a large number of cofactors. It forms dimeric complexes.</text>
</comment>
<comment type="subcellular location">
    <subcellularLocation>
        <location evidence="2">Plastid</location>
        <location evidence="2">Chloroplast thylakoid membrane</location>
        <topology evidence="2">Multi-pass membrane protein</topology>
    </subcellularLocation>
</comment>
<comment type="miscellaneous">
    <text evidence="2">2 of the reaction center chlorophylls (ChlD1 and ChlD2) are entirely coordinated by water.</text>
</comment>
<comment type="similarity">
    <text evidence="2">Belongs to the reaction center PufL/M/PsbA/D family.</text>
</comment>
<dbReference type="EC" id="1.10.3.9" evidence="2"/>
<dbReference type="EMBL" id="EF115542">
    <property type="protein sequence ID" value="ABK79481.1"/>
    <property type="molecule type" value="Genomic_DNA"/>
</dbReference>
<dbReference type="RefSeq" id="YP_899392.1">
    <property type="nucleotide sequence ID" value="NC_008602.1"/>
</dbReference>
<dbReference type="SMR" id="A1E9Q9"/>
<dbReference type="FunCoup" id="A1E9Q9">
    <property type="interactions" value="382"/>
</dbReference>
<dbReference type="STRING" id="4558.A1E9Q9"/>
<dbReference type="GeneID" id="4549103"/>
<dbReference type="KEGG" id="sbi:4549103"/>
<dbReference type="InParanoid" id="A1E9Q9"/>
<dbReference type="OrthoDB" id="34776at2759"/>
<dbReference type="Proteomes" id="UP000000768">
    <property type="component" value="Chloroplast"/>
</dbReference>
<dbReference type="GO" id="GO:0009535">
    <property type="term" value="C:chloroplast thylakoid membrane"/>
    <property type="evidence" value="ECO:0007669"/>
    <property type="project" value="UniProtKB-SubCell"/>
</dbReference>
<dbReference type="GO" id="GO:0009523">
    <property type="term" value="C:photosystem II"/>
    <property type="evidence" value="ECO:0000318"/>
    <property type="project" value="GO_Central"/>
</dbReference>
<dbReference type="GO" id="GO:0016168">
    <property type="term" value="F:chlorophyll binding"/>
    <property type="evidence" value="ECO:0007669"/>
    <property type="project" value="UniProtKB-UniRule"/>
</dbReference>
<dbReference type="GO" id="GO:0045156">
    <property type="term" value="F:electron transporter, transferring electrons within the cyclic electron transport pathway of photosynthesis activity"/>
    <property type="evidence" value="ECO:0007669"/>
    <property type="project" value="InterPro"/>
</dbReference>
<dbReference type="GO" id="GO:0005506">
    <property type="term" value="F:iron ion binding"/>
    <property type="evidence" value="ECO:0007669"/>
    <property type="project" value="UniProtKB-UniRule"/>
</dbReference>
<dbReference type="GO" id="GO:0010242">
    <property type="term" value="F:oxygen evolving activity"/>
    <property type="evidence" value="ECO:0007669"/>
    <property type="project" value="UniProtKB-EC"/>
</dbReference>
<dbReference type="GO" id="GO:0009772">
    <property type="term" value="P:photosynthetic electron transport in photosystem II"/>
    <property type="evidence" value="ECO:0007669"/>
    <property type="project" value="InterPro"/>
</dbReference>
<dbReference type="CDD" id="cd09288">
    <property type="entry name" value="Photosystem-II_D2"/>
    <property type="match status" value="1"/>
</dbReference>
<dbReference type="FunFam" id="1.20.85.10:FF:000001">
    <property type="entry name" value="photosystem II D2 protein-like"/>
    <property type="match status" value="1"/>
</dbReference>
<dbReference type="Gene3D" id="1.20.85.10">
    <property type="entry name" value="Photosystem II protein D1-like"/>
    <property type="match status" value="1"/>
</dbReference>
<dbReference type="HAMAP" id="MF_01383">
    <property type="entry name" value="PSII_PsbD_D2"/>
    <property type="match status" value="1"/>
</dbReference>
<dbReference type="InterPro" id="IPR055266">
    <property type="entry name" value="D1/D2"/>
</dbReference>
<dbReference type="InterPro" id="IPR036854">
    <property type="entry name" value="Photo_II_D1/D2_sf"/>
</dbReference>
<dbReference type="InterPro" id="IPR000484">
    <property type="entry name" value="Photo_RC_L/M"/>
</dbReference>
<dbReference type="InterPro" id="IPR055265">
    <property type="entry name" value="Photo_RC_L/M_CS"/>
</dbReference>
<dbReference type="InterPro" id="IPR005868">
    <property type="entry name" value="PSII_PsbD/D2"/>
</dbReference>
<dbReference type="NCBIfam" id="TIGR01152">
    <property type="entry name" value="psbD"/>
    <property type="match status" value="1"/>
</dbReference>
<dbReference type="PANTHER" id="PTHR33149:SF12">
    <property type="entry name" value="PHOTOSYSTEM II D2 PROTEIN"/>
    <property type="match status" value="1"/>
</dbReference>
<dbReference type="PANTHER" id="PTHR33149">
    <property type="entry name" value="PHOTOSYSTEM II PROTEIN D1"/>
    <property type="match status" value="1"/>
</dbReference>
<dbReference type="Pfam" id="PF00124">
    <property type="entry name" value="Photo_RC"/>
    <property type="match status" value="1"/>
</dbReference>
<dbReference type="PRINTS" id="PR00256">
    <property type="entry name" value="REACTNCENTRE"/>
</dbReference>
<dbReference type="SUPFAM" id="SSF81483">
    <property type="entry name" value="Bacterial photosystem II reaction centre, L and M subunits"/>
    <property type="match status" value="1"/>
</dbReference>
<dbReference type="PROSITE" id="PS00244">
    <property type="entry name" value="REACTION_CENTER"/>
    <property type="match status" value="1"/>
</dbReference>
<feature type="initiator methionine" description="Removed" evidence="1">
    <location>
        <position position="1"/>
    </location>
</feature>
<feature type="chain" id="PRO_0000359696" description="Photosystem II D2 protein">
    <location>
        <begin position="2"/>
        <end position="353"/>
    </location>
</feature>
<feature type="transmembrane region" description="Helical" evidence="2">
    <location>
        <begin position="41"/>
        <end position="61"/>
    </location>
</feature>
<feature type="transmembrane region" description="Helical" evidence="2">
    <location>
        <begin position="125"/>
        <end position="141"/>
    </location>
</feature>
<feature type="transmembrane region" description="Helical" evidence="2">
    <location>
        <begin position="153"/>
        <end position="166"/>
    </location>
</feature>
<feature type="transmembrane region" description="Helical" evidence="2">
    <location>
        <begin position="208"/>
        <end position="228"/>
    </location>
</feature>
<feature type="transmembrane region" description="Helical" evidence="2">
    <location>
        <begin position="279"/>
        <end position="295"/>
    </location>
</feature>
<feature type="binding site" description="axial binding residue" evidence="2">
    <location>
        <position position="118"/>
    </location>
    <ligand>
        <name>chlorophyll a</name>
        <dbReference type="ChEBI" id="CHEBI:58416"/>
        <label>ChlzD2</label>
    </ligand>
    <ligandPart>
        <name>Mg</name>
        <dbReference type="ChEBI" id="CHEBI:25107"/>
    </ligandPart>
</feature>
<feature type="binding site" evidence="2">
    <location>
        <position position="130"/>
    </location>
    <ligand>
        <name>pheophytin a</name>
        <dbReference type="ChEBI" id="CHEBI:136840"/>
        <label>D2</label>
    </ligand>
</feature>
<feature type="binding site" evidence="2">
    <location>
        <position position="143"/>
    </location>
    <ligand>
        <name>pheophytin a</name>
        <dbReference type="ChEBI" id="CHEBI:136840"/>
        <label>D2</label>
    </ligand>
</feature>
<feature type="binding site" description="axial binding residue" evidence="2">
    <location>
        <position position="198"/>
    </location>
    <ligand>
        <name>chlorophyll a</name>
        <dbReference type="ChEBI" id="CHEBI:58416"/>
        <label>PD2</label>
    </ligand>
    <ligandPart>
        <name>Mg</name>
        <dbReference type="ChEBI" id="CHEBI:25107"/>
    </ligandPart>
</feature>
<feature type="binding site" evidence="2">
    <location>
        <position position="215"/>
    </location>
    <ligand>
        <name>a plastoquinone</name>
        <dbReference type="ChEBI" id="CHEBI:17757"/>
        <label>Q(A)</label>
    </ligand>
</feature>
<feature type="binding site" evidence="2">
    <location>
        <position position="215"/>
    </location>
    <ligand>
        <name>Fe cation</name>
        <dbReference type="ChEBI" id="CHEBI:24875"/>
        <note>ligand shared with heterodimeric partner</note>
    </ligand>
</feature>
<feature type="binding site" evidence="2">
    <location>
        <position position="262"/>
    </location>
    <ligand>
        <name>a plastoquinone</name>
        <dbReference type="ChEBI" id="CHEBI:17757"/>
        <label>Q(A)</label>
    </ligand>
</feature>
<feature type="binding site" evidence="2">
    <location>
        <position position="269"/>
    </location>
    <ligand>
        <name>Fe cation</name>
        <dbReference type="ChEBI" id="CHEBI:24875"/>
        <note>ligand shared with heterodimeric partner</note>
    </ligand>
</feature>
<feature type="modified residue" description="N-acetylthreonine" evidence="1">
    <location>
        <position position="2"/>
    </location>
</feature>
<feature type="modified residue" description="Phosphothreonine" evidence="1">
    <location>
        <position position="2"/>
    </location>
</feature>
<gene>
    <name evidence="2" type="primary">psbD</name>
</gene>
<protein>
    <recommendedName>
        <fullName evidence="2">Photosystem II D2 protein</fullName>
        <shortName evidence="2">PSII D2 protein</shortName>
        <ecNumber evidence="2">1.10.3.9</ecNumber>
    </recommendedName>
    <alternativeName>
        <fullName evidence="2">Photosystem Q(A) protein</fullName>
    </alternativeName>
</protein>
<accession>A1E9Q9</accession>
<geneLocation type="chloroplast"/>
<proteinExistence type="inferred from homology"/>
<sequence length="353" mass="39559">MTIAVGRVTKEENDLFDIMDDWLRRDRFVFVGWSGLLLFPCAYFALGGWFTGTTFVTSWYTHGLASSYLEGCNFLTAAVSTPANSLAHSLLLLWGPEAQGDFTRWCQLGGLWTFVALHGAFALIGFMLRQFELARSVQLRPYNAISFSGPIAVFVSVFLIYPLGQSGWFFAPSFGVAAIFRFILFFQGFHNWTLNPFHMMGVAGVLGAALLCAIHGATVENTLFEDGDGANTFRAFNPTQAEETYSMVTANRFWSQIFGVAFSNKRWLHFFMLFVPVTGLWMSAIGVVGLALNLRAYDFVSQEIRAAEDPEFETFYTKNILLNEGIRAWMAAQDQPHENLIFPEEVLPRGNAL</sequence>
<keyword id="KW-0007">Acetylation</keyword>
<keyword id="KW-0148">Chlorophyll</keyword>
<keyword id="KW-0150">Chloroplast</keyword>
<keyword id="KW-0157">Chromophore</keyword>
<keyword id="KW-0249">Electron transport</keyword>
<keyword id="KW-0408">Iron</keyword>
<keyword id="KW-0460">Magnesium</keyword>
<keyword id="KW-0472">Membrane</keyword>
<keyword id="KW-0479">Metal-binding</keyword>
<keyword id="KW-0560">Oxidoreductase</keyword>
<keyword id="KW-0597">Phosphoprotein</keyword>
<keyword id="KW-0602">Photosynthesis</keyword>
<keyword id="KW-0604">Photosystem II</keyword>
<keyword id="KW-0934">Plastid</keyword>
<keyword id="KW-1185">Reference proteome</keyword>
<keyword id="KW-0793">Thylakoid</keyword>
<keyword id="KW-0812">Transmembrane</keyword>
<keyword id="KW-1133">Transmembrane helix</keyword>
<keyword id="KW-0813">Transport</keyword>
<reference key="1">
    <citation type="journal article" date="2007" name="Theor. Appl. Genet.">
        <title>Complete chloroplast genome sequences of Hordeum vulgare, Sorghum bicolor and Agrostis stolonifera, and comparative analyses with other grass genomes.</title>
        <authorList>
            <person name="Saski C."/>
            <person name="Lee S.-B."/>
            <person name="Fjellheim S."/>
            <person name="Guda C."/>
            <person name="Jansen R.K."/>
            <person name="Luo H."/>
            <person name="Tomkins J."/>
            <person name="Rognli O.A."/>
            <person name="Daniell H."/>
            <person name="Clarke J.L."/>
        </authorList>
    </citation>
    <scope>NUCLEOTIDE SEQUENCE [LARGE SCALE GENOMIC DNA]</scope>
    <source>
        <strain>cv. BTx623</strain>
    </source>
</reference>
<evidence type="ECO:0000250" key="1">
    <source>
        <dbReference type="UniProtKB" id="P56761"/>
    </source>
</evidence>
<evidence type="ECO:0000255" key="2">
    <source>
        <dbReference type="HAMAP-Rule" id="MF_01383"/>
    </source>
</evidence>
<name>PSBD_SORBI</name>